<protein>
    <recommendedName>
        <fullName evidence="1">Cell division protein FtsQ</fullName>
    </recommendedName>
</protein>
<comment type="function">
    <text evidence="1">Essential cell division protein. May link together the upstream cell division proteins, which are predominantly cytoplasmic, with the downstream cell division proteins, which are predominantly periplasmic. May control correct divisome assembly.</text>
</comment>
<comment type="subunit">
    <text evidence="1">Part of a complex composed of FtsB, FtsL and FtsQ.</text>
</comment>
<comment type="subcellular location">
    <subcellularLocation>
        <location evidence="1">Cell inner membrane</location>
        <topology evidence="1">Single-pass type II membrane protein</topology>
    </subcellularLocation>
    <text evidence="1">Localizes to the division septum.</text>
</comment>
<comment type="similarity">
    <text evidence="1">Belongs to the FtsQ/DivIB family. FtsQ subfamily.</text>
</comment>
<feature type="chain" id="PRO_0000414700" description="Cell division protein FtsQ">
    <location>
        <begin position="1"/>
        <end position="260"/>
    </location>
</feature>
<feature type="topological domain" description="Cytoplasmic" evidence="1">
    <location>
        <begin position="1"/>
        <end position="26"/>
    </location>
</feature>
<feature type="transmembrane region" description="Helical" evidence="1">
    <location>
        <begin position="27"/>
        <end position="47"/>
    </location>
</feature>
<feature type="topological domain" description="Periplasmic" evidence="1">
    <location>
        <begin position="48"/>
        <end position="260"/>
    </location>
</feature>
<feature type="domain" description="POTRA" evidence="2">
    <location>
        <begin position="52"/>
        <end position="122"/>
    </location>
</feature>
<sequence length="260" mass="29757">MINKVLLEGQRITRSPQVKQHACGASFFLVVLLLIGGLLYSTISWMWDEQRLPLSKLVLQGDLHYVSALDVQRVLARLDHIGTFMSQDINVLQESVQSIPWVSHASIRKQWPDTIKVYLTEYQVEALWNANALLDKNGTVFYGDIARVNGEYVKLYGPDGTAPQVLKAWRDYNPKFAQLGLNISSLVLNDRRAWQIILDNGIRLELGKESLEERISRFFLLYKQLGNKAEQVSYIDLRYDTGAAVGWFPEQELTQEKNDD</sequence>
<accession>Q9KPG9</accession>
<gene>
    <name evidence="1" type="primary">ftsQ</name>
    <name type="ordered locus">VC_2399</name>
</gene>
<dbReference type="EMBL" id="AE003852">
    <property type="protein sequence ID" value="AAF95542.1"/>
    <property type="molecule type" value="Genomic_DNA"/>
</dbReference>
<dbReference type="PIR" id="C82081">
    <property type="entry name" value="C82081"/>
</dbReference>
<dbReference type="RefSeq" id="NP_232029.1">
    <property type="nucleotide sequence ID" value="NC_002505.1"/>
</dbReference>
<dbReference type="RefSeq" id="WP_000608980.1">
    <property type="nucleotide sequence ID" value="NZ_LT906614.1"/>
</dbReference>
<dbReference type="SMR" id="Q9KPG9"/>
<dbReference type="STRING" id="243277.VC_2399"/>
<dbReference type="DNASU" id="2613068"/>
<dbReference type="EnsemblBacteria" id="AAF95542">
    <property type="protein sequence ID" value="AAF95542"/>
    <property type="gene ID" value="VC_2399"/>
</dbReference>
<dbReference type="KEGG" id="vch:VC_2399"/>
<dbReference type="PATRIC" id="fig|243277.26.peg.2284"/>
<dbReference type="eggNOG" id="COG1589">
    <property type="taxonomic scope" value="Bacteria"/>
</dbReference>
<dbReference type="HOGENOM" id="CLU_064041_2_0_6"/>
<dbReference type="Proteomes" id="UP000000584">
    <property type="component" value="Chromosome 1"/>
</dbReference>
<dbReference type="GO" id="GO:0032153">
    <property type="term" value="C:cell division site"/>
    <property type="evidence" value="ECO:0000318"/>
    <property type="project" value="GO_Central"/>
</dbReference>
<dbReference type="GO" id="GO:1990587">
    <property type="term" value="C:FtsQBL complex"/>
    <property type="evidence" value="ECO:0000318"/>
    <property type="project" value="GO_Central"/>
</dbReference>
<dbReference type="GO" id="GO:0005886">
    <property type="term" value="C:plasma membrane"/>
    <property type="evidence" value="ECO:0000318"/>
    <property type="project" value="GO_Central"/>
</dbReference>
<dbReference type="GO" id="GO:0000917">
    <property type="term" value="P:division septum assembly"/>
    <property type="evidence" value="ECO:0000318"/>
    <property type="project" value="GO_Central"/>
</dbReference>
<dbReference type="GO" id="GO:0043093">
    <property type="term" value="P:FtsZ-dependent cytokinesis"/>
    <property type="evidence" value="ECO:0000318"/>
    <property type="project" value="GO_Central"/>
</dbReference>
<dbReference type="Gene3D" id="3.40.50.11690">
    <property type="entry name" value="Cell division protein FtsQ/DivIB"/>
    <property type="match status" value="1"/>
</dbReference>
<dbReference type="Gene3D" id="3.10.20.310">
    <property type="entry name" value="membrane protein fhac"/>
    <property type="match status" value="1"/>
</dbReference>
<dbReference type="HAMAP" id="MF_00911">
    <property type="entry name" value="FtsQ_subfam"/>
    <property type="match status" value="1"/>
</dbReference>
<dbReference type="InterPro" id="IPR005548">
    <property type="entry name" value="Cell_div_FtsQ/DivIB_C"/>
</dbReference>
<dbReference type="InterPro" id="IPR026579">
    <property type="entry name" value="FtsQ"/>
</dbReference>
<dbReference type="InterPro" id="IPR045335">
    <property type="entry name" value="FtsQ_C_sf"/>
</dbReference>
<dbReference type="InterPro" id="IPR034746">
    <property type="entry name" value="POTRA"/>
</dbReference>
<dbReference type="InterPro" id="IPR013685">
    <property type="entry name" value="POTRA_FtsQ_type"/>
</dbReference>
<dbReference type="PANTHER" id="PTHR35851">
    <property type="entry name" value="CELL DIVISION PROTEIN FTSQ"/>
    <property type="match status" value="1"/>
</dbReference>
<dbReference type="PANTHER" id="PTHR35851:SF1">
    <property type="entry name" value="CELL DIVISION PROTEIN FTSQ"/>
    <property type="match status" value="1"/>
</dbReference>
<dbReference type="Pfam" id="PF03799">
    <property type="entry name" value="FtsQ_DivIB_C"/>
    <property type="match status" value="1"/>
</dbReference>
<dbReference type="Pfam" id="PF08478">
    <property type="entry name" value="POTRA_1"/>
    <property type="match status" value="1"/>
</dbReference>
<dbReference type="PROSITE" id="PS51779">
    <property type="entry name" value="POTRA"/>
    <property type="match status" value="1"/>
</dbReference>
<organism>
    <name type="scientific">Vibrio cholerae serotype O1 (strain ATCC 39315 / El Tor Inaba N16961)</name>
    <dbReference type="NCBI Taxonomy" id="243277"/>
    <lineage>
        <taxon>Bacteria</taxon>
        <taxon>Pseudomonadati</taxon>
        <taxon>Pseudomonadota</taxon>
        <taxon>Gammaproteobacteria</taxon>
        <taxon>Vibrionales</taxon>
        <taxon>Vibrionaceae</taxon>
        <taxon>Vibrio</taxon>
    </lineage>
</organism>
<proteinExistence type="inferred from homology"/>
<reference key="1">
    <citation type="journal article" date="2000" name="Nature">
        <title>DNA sequence of both chromosomes of the cholera pathogen Vibrio cholerae.</title>
        <authorList>
            <person name="Heidelberg J.F."/>
            <person name="Eisen J.A."/>
            <person name="Nelson W.C."/>
            <person name="Clayton R.A."/>
            <person name="Gwinn M.L."/>
            <person name="Dodson R.J."/>
            <person name="Haft D.H."/>
            <person name="Hickey E.K."/>
            <person name="Peterson J.D."/>
            <person name="Umayam L.A."/>
            <person name="Gill S.R."/>
            <person name="Nelson K.E."/>
            <person name="Read T.D."/>
            <person name="Tettelin H."/>
            <person name="Richardson D.L."/>
            <person name="Ermolaeva M.D."/>
            <person name="Vamathevan J.J."/>
            <person name="Bass S."/>
            <person name="Qin H."/>
            <person name="Dragoi I."/>
            <person name="Sellers P."/>
            <person name="McDonald L.A."/>
            <person name="Utterback T.R."/>
            <person name="Fleischmann R.D."/>
            <person name="Nierman W.C."/>
            <person name="White O."/>
            <person name="Salzberg S.L."/>
            <person name="Smith H.O."/>
            <person name="Colwell R.R."/>
            <person name="Mekalanos J.J."/>
            <person name="Venter J.C."/>
            <person name="Fraser C.M."/>
        </authorList>
    </citation>
    <scope>NUCLEOTIDE SEQUENCE [LARGE SCALE GENOMIC DNA]</scope>
    <source>
        <strain>ATCC 39315 / El Tor Inaba N16961</strain>
    </source>
</reference>
<keyword id="KW-0131">Cell cycle</keyword>
<keyword id="KW-0132">Cell division</keyword>
<keyword id="KW-0997">Cell inner membrane</keyword>
<keyword id="KW-1003">Cell membrane</keyword>
<keyword id="KW-0472">Membrane</keyword>
<keyword id="KW-1185">Reference proteome</keyword>
<keyword id="KW-0812">Transmembrane</keyword>
<keyword id="KW-1133">Transmembrane helix</keyword>
<name>FTSQ_VIBCH</name>
<evidence type="ECO:0000255" key="1">
    <source>
        <dbReference type="HAMAP-Rule" id="MF_00911"/>
    </source>
</evidence>
<evidence type="ECO:0000255" key="2">
    <source>
        <dbReference type="PROSITE-ProRule" id="PRU01115"/>
    </source>
</evidence>